<keyword id="KW-0520">NAD</keyword>
<keyword id="KW-0560">Oxidoreductase</keyword>
<keyword id="KW-1185">Reference proteome</keyword>
<keyword id="KW-0816">Tricarboxylic acid cycle</keyword>
<feature type="chain" id="PRO_1000191621" description="Malate dehydrogenase">
    <location>
        <begin position="1"/>
        <end position="328"/>
    </location>
</feature>
<feature type="active site" description="Proton acceptor" evidence="1">
    <location>
        <position position="190"/>
    </location>
</feature>
<feature type="binding site" evidence="1">
    <location>
        <begin position="12"/>
        <end position="18"/>
    </location>
    <ligand>
        <name>NAD(+)</name>
        <dbReference type="ChEBI" id="CHEBI:57540"/>
    </ligand>
</feature>
<feature type="binding site" evidence="1">
    <location>
        <position position="95"/>
    </location>
    <ligand>
        <name>substrate</name>
    </ligand>
</feature>
<feature type="binding site" evidence="1">
    <location>
        <position position="101"/>
    </location>
    <ligand>
        <name>substrate</name>
    </ligand>
</feature>
<feature type="binding site" evidence="1">
    <location>
        <position position="108"/>
    </location>
    <ligand>
        <name>NAD(+)</name>
        <dbReference type="ChEBI" id="CHEBI:57540"/>
    </ligand>
</feature>
<feature type="binding site" evidence="1">
    <location>
        <position position="115"/>
    </location>
    <ligand>
        <name>NAD(+)</name>
        <dbReference type="ChEBI" id="CHEBI:57540"/>
    </ligand>
</feature>
<feature type="binding site" evidence="1">
    <location>
        <begin position="132"/>
        <end position="134"/>
    </location>
    <ligand>
        <name>NAD(+)</name>
        <dbReference type="ChEBI" id="CHEBI:57540"/>
    </ligand>
</feature>
<feature type="binding site" evidence="1">
    <location>
        <position position="134"/>
    </location>
    <ligand>
        <name>substrate</name>
    </ligand>
</feature>
<feature type="binding site" evidence="1">
    <location>
        <position position="165"/>
    </location>
    <ligand>
        <name>substrate</name>
    </ligand>
</feature>
<name>MDH_DELAS</name>
<dbReference type="EC" id="1.1.1.37" evidence="1"/>
<dbReference type="EMBL" id="CP000884">
    <property type="protein sequence ID" value="ABX35067.1"/>
    <property type="molecule type" value="Genomic_DNA"/>
</dbReference>
<dbReference type="RefSeq" id="WP_012204349.1">
    <property type="nucleotide sequence ID" value="NC_010002.1"/>
</dbReference>
<dbReference type="SMR" id="A9BVK0"/>
<dbReference type="STRING" id="398578.Daci_2429"/>
<dbReference type="KEGG" id="dac:Daci_2429"/>
<dbReference type="eggNOG" id="COG0039">
    <property type="taxonomic scope" value="Bacteria"/>
</dbReference>
<dbReference type="HOGENOM" id="CLU_040727_2_0_4"/>
<dbReference type="Proteomes" id="UP000000784">
    <property type="component" value="Chromosome"/>
</dbReference>
<dbReference type="GO" id="GO:0030060">
    <property type="term" value="F:L-malate dehydrogenase (NAD+) activity"/>
    <property type="evidence" value="ECO:0007669"/>
    <property type="project" value="UniProtKB-UniRule"/>
</dbReference>
<dbReference type="GO" id="GO:0006108">
    <property type="term" value="P:malate metabolic process"/>
    <property type="evidence" value="ECO:0007669"/>
    <property type="project" value="InterPro"/>
</dbReference>
<dbReference type="GO" id="GO:0006099">
    <property type="term" value="P:tricarboxylic acid cycle"/>
    <property type="evidence" value="ECO:0007669"/>
    <property type="project" value="UniProtKB-UniRule"/>
</dbReference>
<dbReference type="CDD" id="cd01338">
    <property type="entry name" value="MDH_chloroplast-like"/>
    <property type="match status" value="1"/>
</dbReference>
<dbReference type="FunFam" id="3.40.50.720:FF:000010">
    <property type="entry name" value="Malate dehydrogenase"/>
    <property type="match status" value="1"/>
</dbReference>
<dbReference type="FunFam" id="3.90.110.10:FF:000002">
    <property type="entry name" value="Malate dehydrogenase"/>
    <property type="match status" value="1"/>
</dbReference>
<dbReference type="Gene3D" id="3.90.110.10">
    <property type="entry name" value="Lactate dehydrogenase/glycoside hydrolase, family 4, C-terminal"/>
    <property type="match status" value="1"/>
</dbReference>
<dbReference type="Gene3D" id="3.40.50.720">
    <property type="entry name" value="NAD(P)-binding Rossmann-like Domain"/>
    <property type="match status" value="1"/>
</dbReference>
<dbReference type="HAMAP" id="MF_01517">
    <property type="entry name" value="Malate_dehydrog_2"/>
    <property type="match status" value="1"/>
</dbReference>
<dbReference type="InterPro" id="IPR001557">
    <property type="entry name" value="L-lactate/malate_DH"/>
</dbReference>
<dbReference type="InterPro" id="IPR022383">
    <property type="entry name" value="Lactate/malate_DH_C"/>
</dbReference>
<dbReference type="InterPro" id="IPR001236">
    <property type="entry name" value="Lactate/malate_DH_N"/>
</dbReference>
<dbReference type="InterPro" id="IPR015955">
    <property type="entry name" value="Lactate_DH/Glyco_Ohase_4_C"/>
</dbReference>
<dbReference type="InterPro" id="IPR010945">
    <property type="entry name" value="Malate_DH_type2"/>
</dbReference>
<dbReference type="InterPro" id="IPR036291">
    <property type="entry name" value="NAD(P)-bd_dom_sf"/>
</dbReference>
<dbReference type="NCBIfam" id="TIGR01759">
    <property type="entry name" value="MalateDH-SF1"/>
    <property type="match status" value="1"/>
</dbReference>
<dbReference type="NCBIfam" id="NF003916">
    <property type="entry name" value="PRK05442.1"/>
    <property type="match status" value="1"/>
</dbReference>
<dbReference type="PANTHER" id="PTHR23382">
    <property type="entry name" value="MALATE DEHYDROGENASE"/>
    <property type="match status" value="1"/>
</dbReference>
<dbReference type="Pfam" id="PF02866">
    <property type="entry name" value="Ldh_1_C"/>
    <property type="match status" value="1"/>
</dbReference>
<dbReference type="Pfam" id="PF00056">
    <property type="entry name" value="Ldh_1_N"/>
    <property type="match status" value="1"/>
</dbReference>
<dbReference type="PIRSF" id="PIRSF000102">
    <property type="entry name" value="Lac_mal_DH"/>
    <property type="match status" value="1"/>
</dbReference>
<dbReference type="SUPFAM" id="SSF56327">
    <property type="entry name" value="LDH C-terminal domain-like"/>
    <property type="match status" value="1"/>
</dbReference>
<dbReference type="SUPFAM" id="SSF51735">
    <property type="entry name" value="NAD(P)-binding Rossmann-fold domains"/>
    <property type="match status" value="1"/>
</dbReference>
<evidence type="ECO:0000255" key="1">
    <source>
        <dbReference type="HAMAP-Rule" id="MF_01517"/>
    </source>
</evidence>
<protein>
    <recommendedName>
        <fullName evidence="1">Malate dehydrogenase</fullName>
        <ecNumber evidence="1">1.1.1.37</ecNumber>
    </recommendedName>
</protein>
<accession>A9BVK0</accession>
<gene>
    <name evidence="1" type="primary">mdh</name>
    <name type="ordered locus">Daci_2429</name>
</gene>
<reference key="1">
    <citation type="submission" date="2007-11" db="EMBL/GenBank/DDBJ databases">
        <title>Complete sequence of Delftia acidovorans DSM 14801 / SPH-1.</title>
        <authorList>
            <person name="Copeland A."/>
            <person name="Lucas S."/>
            <person name="Lapidus A."/>
            <person name="Barry K."/>
            <person name="Glavina del Rio T."/>
            <person name="Dalin E."/>
            <person name="Tice H."/>
            <person name="Pitluck S."/>
            <person name="Lowry S."/>
            <person name="Clum A."/>
            <person name="Schmutz J."/>
            <person name="Larimer F."/>
            <person name="Land M."/>
            <person name="Hauser L."/>
            <person name="Kyrpides N."/>
            <person name="Kim E."/>
            <person name="Schleheck D."/>
            <person name="Richardson P."/>
        </authorList>
    </citation>
    <scope>NUCLEOTIDE SEQUENCE [LARGE SCALE GENOMIC DNA]</scope>
    <source>
        <strain>DSM 14801 / SPH-1</strain>
    </source>
</reference>
<comment type="function">
    <text evidence="1">Catalyzes the reversible oxidation of malate to oxaloacetate.</text>
</comment>
<comment type="catalytic activity">
    <reaction evidence="1">
        <text>(S)-malate + NAD(+) = oxaloacetate + NADH + H(+)</text>
        <dbReference type="Rhea" id="RHEA:21432"/>
        <dbReference type="ChEBI" id="CHEBI:15378"/>
        <dbReference type="ChEBI" id="CHEBI:15589"/>
        <dbReference type="ChEBI" id="CHEBI:16452"/>
        <dbReference type="ChEBI" id="CHEBI:57540"/>
        <dbReference type="ChEBI" id="CHEBI:57945"/>
        <dbReference type="EC" id="1.1.1.37"/>
    </reaction>
</comment>
<comment type="similarity">
    <text evidence="1">Belongs to the LDH/MDH superfamily. MDH type 2 family.</text>
</comment>
<sequence>MSKKPVRVAVTGAAGQIGYALLFRIASGEMLGKDQPVILQLLEIPDEKAQNALKGVIMELEDCAFPLLAGIEAHSDPLQAFKDTDYALLVGARPRGPGMERADLLAANAQIFTAQGKALNAVASRNVKVLVVGNPANTNAYIAMKSAPDLPAKNFTAMLRLDHNRAASQLAAKAGFKVGDIRKLTVWGNHSPTMYADYRFATVNGESVKAKINDQAWNKDVFLPTVGKRGAAIIAARGLSSAASAANAAIDHMRDWALGSGGEWVTMGVPSNGEYGIPAGIVFGFPVTTENGEYKIVEGLEIDAFSQECIDKTLAELQGEQDGVKHLL</sequence>
<organism>
    <name type="scientific">Delftia acidovorans (strain DSM 14801 / SPH-1)</name>
    <dbReference type="NCBI Taxonomy" id="398578"/>
    <lineage>
        <taxon>Bacteria</taxon>
        <taxon>Pseudomonadati</taxon>
        <taxon>Pseudomonadota</taxon>
        <taxon>Betaproteobacteria</taxon>
        <taxon>Burkholderiales</taxon>
        <taxon>Comamonadaceae</taxon>
        <taxon>Delftia</taxon>
    </lineage>
</organism>
<proteinExistence type="inferred from homology"/>